<protein>
    <recommendedName>
        <fullName evidence="17">Acid beta-fructofuranosidase 4, vacuolar</fullName>
        <shortName evidence="17">At beta fruct4</shortName>
        <shortName evidence="17">AtBETAFRUCT4</shortName>
        <ecNumber evidence="5">3.2.1.26</ecNumber>
    </recommendedName>
    <alternativeName>
        <fullName evidence="17">Acid invertase 4</fullName>
        <shortName evidence="17">AI 4</shortName>
    </alternativeName>
    <alternativeName>
        <fullName evidence="18">Acid sucrose hydrolase 4</fullName>
    </alternativeName>
    <alternativeName>
        <fullName evidence="15">Vacuolar invertase 4</fullName>
        <shortName evidence="15">Inv-V4</shortName>
        <shortName evidence="16">VAC-INV 4</shortName>
        <shortName evidence="15">VI 4</shortName>
    </alternativeName>
</protein>
<gene>
    <name evidence="17" type="primary">BFRUCT4</name>
    <name evidence="17" type="synonym">BETAFRUCT4</name>
    <name evidence="19" type="ordered locus">At1g12240</name>
    <name evidence="20" type="ORF">T28K15.3</name>
</gene>
<sequence length="664" mass="73844">MASSDALLPISAREEEPLCPYTRLPMADPNQETHGPRRRRPFKGLLAVSFGLLFIAFYVALIATHDGSRSNDEGIDETETITSRARLAGVSEKRNDGLWKLSGDRNTPAFEWNNSMLSWQRTAFHFQPEQNWMNDPNGPLFYKGWYHFFYQYNPNAAVWGDIVWGHAVSRDLIHWVHLPIAMVADQWYDSNGVWTGSATFLPDGSIVMLYTGSTDKAVQVQNLAYPEDPNDPLLLKWVKFPGNPVLVPPPGILPKDFRDPTTAWKTSEGKWRITIGSKLNKTGISLVYDTIDFKTYEKLDTLLHRVPNTGMWECVDFYPVSKTAGNGLDTSVNGPDVKHIVKASMDDTRFDHYAVGTYFDSNGTWIPDDPTIDVGMTASLRYDYGKFYASKSFYDQNKGRRVLWSWIGESDSEASDVQKGWSSLQGIPRTVVLDTKTGKNLVQWPVEEIKSLRLSSKQFDLEVGPGSVVPVDVGSAAQLDIEAEFEINKESLDKIIGNASVVAEAEEFSCEKSGGSTVRGALGPFGFSVLATESLSEQTPVYFYVAKGKDSELKTFFCTDTSRSSVANDVVKPIYGSVVPVLKGEKLTMRILVDHSIVEAFGQGGRTCITSRVYPTTAIYGAAKLFLFNNALDATVTASFTVWQMNSAFIHPYSDEAVRALSRT</sequence>
<name>INVA4_ARATH</name>
<keyword id="KW-0938">Abscisic acid signaling pathway</keyword>
<keyword id="KW-1015">Disulfide bond</keyword>
<keyword id="KW-0256">Endoplasmic reticulum</keyword>
<keyword id="KW-0325">Glycoprotein</keyword>
<keyword id="KW-0326">Glycosidase</keyword>
<keyword id="KW-0333">Golgi apparatus</keyword>
<keyword id="KW-0378">Hydrolase</keyword>
<keyword id="KW-0472">Membrane</keyword>
<keyword id="KW-1185">Reference proteome</keyword>
<keyword id="KW-0735">Signal-anchor</keyword>
<keyword id="KW-0812">Transmembrane</keyword>
<keyword id="KW-1133">Transmembrane helix</keyword>
<keyword id="KW-0926">Vacuole</keyword>
<keyword id="KW-0865">Zymogen</keyword>
<evidence type="ECO:0000250" key="1">
    <source>
        <dbReference type="UniProtKB" id="P29001"/>
    </source>
</evidence>
<evidence type="ECO:0000250" key="2">
    <source>
        <dbReference type="UniProtKB" id="P80065"/>
    </source>
</evidence>
<evidence type="ECO:0000250" key="3">
    <source>
        <dbReference type="UniProtKB" id="Q43866"/>
    </source>
</evidence>
<evidence type="ECO:0000255" key="4"/>
<evidence type="ECO:0000255" key="5">
    <source>
        <dbReference type="PROSITE-ProRule" id="PRU10067"/>
    </source>
</evidence>
<evidence type="ECO:0000269" key="6">
    <source>
    </source>
</evidence>
<evidence type="ECO:0000269" key="7">
    <source>
    </source>
</evidence>
<evidence type="ECO:0000269" key="8">
    <source>
    </source>
</evidence>
<evidence type="ECO:0000269" key="9">
    <source>
    </source>
</evidence>
<evidence type="ECO:0000269" key="10">
    <source>
    </source>
</evidence>
<evidence type="ECO:0000269" key="11">
    <source>
    </source>
</evidence>
<evidence type="ECO:0000269" key="12">
    <source>
    </source>
</evidence>
<evidence type="ECO:0000269" key="13">
    <source>
    </source>
</evidence>
<evidence type="ECO:0000269" key="14">
    <source>
    </source>
</evidence>
<evidence type="ECO:0000303" key="15">
    <source>
    </source>
</evidence>
<evidence type="ECO:0000303" key="16">
    <source>
    </source>
</evidence>
<evidence type="ECO:0000303" key="17">
    <source>
    </source>
</evidence>
<evidence type="ECO:0000305" key="18"/>
<evidence type="ECO:0000312" key="19">
    <source>
        <dbReference type="Araport" id="AT1G12240"/>
    </source>
</evidence>
<evidence type="ECO:0000312" key="20">
    <source>
        <dbReference type="EMBL" id="AAG12569.1"/>
    </source>
</evidence>
<proteinExistence type="evidence at protein level"/>
<accession>Q39041</accession>
<accession>Q7DLW9</accession>
<accession>Q8GX36</accession>
<dbReference type="EC" id="3.2.1.26" evidence="5"/>
<dbReference type="EMBL" id="X97749">
    <property type="protein sequence ID" value="CAA66330.1"/>
    <property type="molecule type" value="mRNA"/>
</dbReference>
<dbReference type="EMBL" id="Y11559">
    <property type="protein sequence ID" value="CAA72321.1"/>
    <property type="molecule type" value="Genomic_DNA"/>
</dbReference>
<dbReference type="EMBL" id="AC022522">
    <property type="protein sequence ID" value="AAG12569.1"/>
    <property type="molecule type" value="Genomic_DNA"/>
</dbReference>
<dbReference type="EMBL" id="CP002684">
    <property type="protein sequence ID" value="AEE28855.1"/>
    <property type="molecule type" value="Genomic_DNA"/>
</dbReference>
<dbReference type="EMBL" id="AY046009">
    <property type="protein sequence ID" value="AAK76683.1"/>
    <property type="molecule type" value="mRNA"/>
</dbReference>
<dbReference type="EMBL" id="AY142666">
    <property type="protein sequence ID" value="AAN13204.1"/>
    <property type="molecule type" value="mRNA"/>
</dbReference>
<dbReference type="EMBL" id="AK118459">
    <property type="protein sequence ID" value="BAC43067.1"/>
    <property type="status" value="ALT_INIT"/>
    <property type="molecule type" value="mRNA"/>
</dbReference>
<dbReference type="PIR" id="E86257">
    <property type="entry name" value="E86257"/>
</dbReference>
<dbReference type="PIR" id="S71276">
    <property type="entry name" value="S71276"/>
</dbReference>
<dbReference type="SMR" id="Q39041"/>
<dbReference type="BioGRID" id="23017">
    <property type="interactions" value="2"/>
</dbReference>
<dbReference type="FunCoup" id="Q39041">
    <property type="interactions" value="601"/>
</dbReference>
<dbReference type="IntAct" id="Q39041">
    <property type="interactions" value="2"/>
</dbReference>
<dbReference type="STRING" id="3702.Q39041"/>
<dbReference type="CAZy" id="GH32">
    <property type="family name" value="Glycoside Hydrolase Family 32"/>
</dbReference>
<dbReference type="GlyCosmos" id="Q39041">
    <property type="glycosylation" value="4 sites, No reported glycans"/>
</dbReference>
<dbReference type="GlyGen" id="Q39041">
    <property type="glycosylation" value="4 sites"/>
</dbReference>
<dbReference type="iPTMnet" id="Q39041"/>
<dbReference type="PaxDb" id="3702-AT1G12240.1"/>
<dbReference type="ProteomicsDB" id="247030"/>
<dbReference type="EnsemblPlants" id="AT1G12240.1">
    <property type="protein sequence ID" value="AT1G12240.1"/>
    <property type="gene ID" value="AT1G12240"/>
</dbReference>
<dbReference type="GeneID" id="837777"/>
<dbReference type="Gramene" id="AT1G12240.1">
    <property type="protein sequence ID" value="AT1G12240.1"/>
    <property type="gene ID" value="AT1G12240"/>
</dbReference>
<dbReference type="KEGG" id="ath:AT1G12240"/>
<dbReference type="Araport" id="AT1G12240"/>
<dbReference type="TAIR" id="AT1G12240">
    <property type="gene designation" value="ATBETAFRUCT4"/>
</dbReference>
<dbReference type="eggNOG" id="KOG0228">
    <property type="taxonomic scope" value="Eukaryota"/>
</dbReference>
<dbReference type="HOGENOM" id="CLU_001528_6_1_1"/>
<dbReference type="InParanoid" id="Q39041"/>
<dbReference type="OMA" id="ALWEMPD"/>
<dbReference type="PhylomeDB" id="Q39041"/>
<dbReference type="BioCyc" id="ARA:AT1G12240-MONOMER"/>
<dbReference type="UniPathway" id="UPA00238"/>
<dbReference type="PRO" id="PR:Q39041"/>
<dbReference type="Proteomes" id="UP000006548">
    <property type="component" value="Chromosome 1"/>
</dbReference>
<dbReference type="ExpressionAtlas" id="Q39041">
    <property type="expression patterns" value="baseline and differential"/>
</dbReference>
<dbReference type="GO" id="GO:0005789">
    <property type="term" value="C:endoplasmic reticulum membrane"/>
    <property type="evidence" value="ECO:0007669"/>
    <property type="project" value="UniProtKB-SubCell"/>
</dbReference>
<dbReference type="GO" id="GO:0000139">
    <property type="term" value="C:Golgi membrane"/>
    <property type="evidence" value="ECO:0007669"/>
    <property type="project" value="UniProtKB-SubCell"/>
</dbReference>
<dbReference type="GO" id="GO:0016020">
    <property type="term" value="C:membrane"/>
    <property type="evidence" value="ECO:0007005"/>
    <property type="project" value="TAIR"/>
</dbReference>
<dbReference type="GO" id="GO:0000325">
    <property type="term" value="C:plant-type vacuole"/>
    <property type="evidence" value="ECO:0000314"/>
    <property type="project" value="UniProtKB"/>
</dbReference>
<dbReference type="GO" id="GO:0005775">
    <property type="term" value="C:vacuolar lumen"/>
    <property type="evidence" value="ECO:0007669"/>
    <property type="project" value="UniProtKB-SubCell"/>
</dbReference>
<dbReference type="GO" id="GO:0005774">
    <property type="term" value="C:vacuolar membrane"/>
    <property type="evidence" value="ECO:0007669"/>
    <property type="project" value="UniProtKB-SubCell"/>
</dbReference>
<dbReference type="GO" id="GO:0005773">
    <property type="term" value="C:vacuole"/>
    <property type="evidence" value="ECO:0000250"/>
    <property type="project" value="TAIR"/>
</dbReference>
<dbReference type="GO" id="GO:0004564">
    <property type="term" value="F:beta-fructofuranosidase activity"/>
    <property type="evidence" value="ECO:0000250"/>
    <property type="project" value="TAIR"/>
</dbReference>
<dbReference type="GO" id="GO:0009738">
    <property type="term" value="P:abscisic acid-activated signaling pathway"/>
    <property type="evidence" value="ECO:0007669"/>
    <property type="project" value="UniProtKB-KW"/>
</dbReference>
<dbReference type="GO" id="GO:0071370">
    <property type="term" value="P:cellular response to gibberellin stimulus"/>
    <property type="evidence" value="ECO:0000270"/>
    <property type="project" value="UniProtKB"/>
</dbReference>
<dbReference type="GO" id="GO:0080022">
    <property type="term" value="P:primary root development"/>
    <property type="evidence" value="ECO:0000315"/>
    <property type="project" value="UniProtKB"/>
</dbReference>
<dbReference type="GO" id="GO:0009617">
    <property type="term" value="P:response to bacterium"/>
    <property type="evidence" value="ECO:0000270"/>
    <property type="project" value="UniProtKB"/>
</dbReference>
<dbReference type="GO" id="GO:0005985">
    <property type="term" value="P:sucrose metabolic process"/>
    <property type="evidence" value="ECO:0007669"/>
    <property type="project" value="UniProtKB-UniPathway"/>
</dbReference>
<dbReference type="CDD" id="cd18624">
    <property type="entry name" value="GH32_Fruct1-like"/>
    <property type="match status" value="1"/>
</dbReference>
<dbReference type="FunFam" id="2.115.10.20:FF:000001">
    <property type="entry name" value="Beta-fructofuranosidase, insoluble isoenzyme CWINV1"/>
    <property type="match status" value="1"/>
</dbReference>
<dbReference type="FunFam" id="2.60.120.560:FF:000002">
    <property type="entry name" value="Beta-fructofuranosidase, insoluble isoenzyme CWINV1"/>
    <property type="match status" value="1"/>
</dbReference>
<dbReference type="Gene3D" id="2.60.120.560">
    <property type="entry name" value="Exo-inulinase, domain 1"/>
    <property type="match status" value="1"/>
</dbReference>
<dbReference type="Gene3D" id="2.115.10.20">
    <property type="entry name" value="Glycosyl hydrolase domain, family 43"/>
    <property type="match status" value="1"/>
</dbReference>
<dbReference type="InterPro" id="IPR021792">
    <property type="entry name" value="Beta-fructofuranosidase_N"/>
</dbReference>
<dbReference type="InterPro" id="IPR013320">
    <property type="entry name" value="ConA-like_dom_sf"/>
</dbReference>
<dbReference type="InterPro" id="IPR050551">
    <property type="entry name" value="Fructan_Metab_Enzymes"/>
</dbReference>
<dbReference type="InterPro" id="IPR001362">
    <property type="entry name" value="Glyco_hydro_32"/>
</dbReference>
<dbReference type="InterPro" id="IPR018053">
    <property type="entry name" value="Glyco_hydro_32_AS"/>
</dbReference>
<dbReference type="InterPro" id="IPR013189">
    <property type="entry name" value="Glyco_hydro_32_C"/>
</dbReference>
<dbReference type="InterPro" id="IPR013148">
    <property type="entry name" value="Glyco_hydro_32_N"/>
</dbReference>
<dbReference type="InterPro" id="IPR023296">
    <property type="entry name" value="Glyco_hydro_beta-prop_sf"/>
</dbReference>
<dbReference type="PANTHER" id="PTHR31953">
    <property type="entry name" value="BETA-FRUCTOFURANOSIDASE, INSOLUBLE ISOENZYME CWINV1-RELATED"/>
    <property type="match status" value="1"/>
</dbReference>
<dbReference type="Pfam" id="PF08244">
    <property type="entry name" value="Glyco_hydro_32C"/>
    <property type="match status" value="1"/>
</dbReference>
<dbReference type="Pfam" id="PF00251">
    <property type="entry name" value="Glyco_hydro_32N"/>
    <property type="match status" value="1"/>
</dbReference>
<dbReference type="Pfam" id="PF11837">
    <property type="entry name" value="INV_N"/>
    <property type="match status" value="1"/>
</dbReference>
<dbReference type="SMART" id="SM00640">
    <property type="entry name" value="Glyco_32"/>
    <property type="match status" value="1"/>
</dbReference>
<dbReference type="SUPFAM" id="SSF75005">
    <property type="entry name" value="Arabinanase/levansucrase/invertase"/>
    <property type="match status" value="1"/>
</dbReference>
<dbReference type="SUPFAM" id="SSF49899">
    <property type="entry name" value="Concanavalin A-like lectins/glucanases"/>
    <property type="match status" value="1"/>
</dbReference>
<dbReference type="PROSITE" id="PS00609">
    <property type="entry name" value="GLYCOSYL_HYDROL_F32"/>
    <property type="match status" value="1"/>
</dbReference>
<organism>
    <name type="scientific">Arabidopsis thaliana</name>
    <name type="common">Mouse-ear cress</name>
    <dbReference type="NCBI Taxonomy" id="3702"/>
    <lineage>
        <taxon>Eukaryota</taxon>
        <taxon>Viridiplantae</taxon>
        <taxon>Streptophyta</taxon>
        <taxon>Embryophyta</taxon>
        <taxon>Tracheophyta</taxon>
        <taxon>Spermatophyta</taxon>
        <taxon>Magnoliopsida</taxon>
        <taxon>eudicotyledons</taxon>
        <taxon>Gunneridae</taxon>
        <taxon>Pentapetalae</taxon>
        <taxon>rosids</taxon>
        <taxon>malvids</taxon>
        <taxon>Brassicales</taxon>
        <taxon>Brassicaceae</taxon>
        <taxon>Camelineae</taxon>
        <taxon>Arabidopsis</taxon>
    </lineage>
</organism>
<feature type="propeptide" id="PRO_0000417019" description="Removed in mature form" evidence="2">
    <location>
        <begin position="1"/>
        <end position="108"/>
    </location>
</feature>
<feature type="chain" id="PRO_0000417020" description="Acid beta-fructofuranosidase 4, vacuolar">
    <location>
        <begin position="109"/>
        <end position="664"/>
    </location>
</feature>
<feature type="topological domain" description="Cytoplasmic" evidence="18">
    <location>
        <begin position="1"/>
        <end position="43"/>
    </location>
</feature>
<feature type="transmembrane region" description="Helical; Signal-anchor for type II membrane protein" evidence="4">
    <location>
        <begin position="44"/>
        <end position="64"/>
    </location>
</feature>
<feature type="topological domain" description="Lumenal" evidence="18">
    <location>
        <begin position="65"/>
        <end position="664"/>
    </location>
</feature>
<feature type="short sequence motif" description="Critical for endoplasmic reticulum export" evidence="12">
    <location>
        <begin position="7"/>
        <end position="8"/>
    </location>
</feature>
<feature type="short sequence motif" description="Critical for endoplasmic reticulum export" evidence="12">
    <location>
        <begin position="9"/>
        <end position="10"/>
    </location>
</feature>
<feature type="short sequence motif" description="Critical for trafficking from the trans-Golgi network to the prevacuolar compartment and from the prevacuolar compartment to the central vacuole" evidence="12">
    <location>
        <begin position="14"/>
        <end position="16"/>
    </location>
</feature>
<feature type="active site" evidence="5">
    <location>
        <position position="135"/>
    </location>
</feature>
<feature type="binding site" evidence="3">
    <location>
        <begin position="132"/>
        <end position="135"/>
    </location>
    <ligand>
        <name>substrate</name>
    </ligand>
</feature>
<feature type="binding site" evidence="3">
    <location>
        <position position="151"/>
    </location>
    <ligand>
        <name>substrate</name>
    </ligand>
</feature>
<feature type="binding site" evidence="3">
    <location>
        <position position="159"/>
    </location>
    <ligand>
        <name>substrate</name>
    </ligand>
</feature>
<feature type="binding site" evidence="3">
    <location>
        <begin position="194"/>
        <end position="195"/>
    </location>
    <ligand>
        <name>substrate</name>
    </ligand>
</feature>
<feature type="binding site" evidence="3">
    <location>
        <begin position="258"/>
        <end position="259"/>
    </location>
    <ligand>
        <name>substrate</name>
    </ligand>
</feature>
<feature type="binding site" evidence="3">
    <location>
        <position position="313"/>
    </location>
    <ligand>
        <name>substrate</name>
    </ligand>
</feature>
<feature type="binding site" evidence="3">
    <location>
        <position position="346"/>
    </location>
    <ligand>
        <name>substrate</name>
    </ligand>
</feature>
<feature type="glycosylation site" description="N-linked (GlcNAc...) asparagine" evidence="4">
    <location>
        <position position="113"/>
    </location>
</feature>
<feature type="glycosylation site" description="N-linked (GlcNAc...) (complex) asparagine" evidence="4">
    <location>
        <position position="280"/>
    </location>
</feature>
<feature type="glycosylation site" description="N-linked (GlcNAc...) asparagine" evidence="4">
    <location>
        <position position="362"/>
    </location>
</feature>
<feature type="glycosylation site" description="N-linked (GlcNAc...) asparagine" evidence="4">
    <location>
        <position position="498"/>
    </location>
</feature>
<feature type="disulfide bond" evidence="3">
    <location>
        <begin position="510"/>
        <end position="558"/>
    </location>
</feature>
<feature type="mutagenesis site" description="No effect on localization." evidence="13">
    <location>
        <position position="2"/>
    </location>
</feature>
<feature type="mutagenesis site" description="Endoplasmic reticulum localization." evidence="13">
    <location>
        <begin position="3"/>
        <end position="4"/>
    </location>
</feature>
<feature type="mutagenesis site" description="Partial retention in the endoplasmic reticulum." evidence="13">
    <location>
        <position position="3"/>
    </location>
</feature>
<feature type="mutagenesis site" description="Partial retention in the endoplasmic reticulum." evidence="13">
    <location>
        <position position="4"/>
    </location>
</feature>
<feature type="mutagenesis site" description="Endoplasmic reticulum localization." evidence="13">
    <location>
        <position position="5"/>
    </location>
</feature>
<feature type="mutagenesis site" description="No effect on localization." evidence="13">
    <location>
        <position position="6"/>
    </location>
</feature>
<feature type="mutagenesis site" description="Reduced vacuolar trafficking." evidence="12">
    <original>LL</original>
    <variation>AA</variation>
    <location>
        <begin position="7"/>
        <end position="8"/>
    </location>
</feature>
<feature type="mutagenesis site" description="Endoplasmic reticulum localization." evidence="13">
    <location>
        <begin position="7"/>
        <end position="8"/>
    </location>
</feature>
<feature type="mutagenesis site" description="Partial retention in the endoplasmic reticulum." evidence="13">
    <location>
        <position position="7"/>
    </location>
</feature>
<feature type="mutagenesis site" description="Partial retention in the endoplasmic reticulum." evidence="13">
    <location>
        <position position="8"/>
    </location>
</feature>
<feature type="mutagenesis site" description="Reduced vacuolar trafficking." evidence="12">
    <original>PI</original>
    <variation>AA</variation>
    <location>
        <begin position="9"/>
        <end position="10"/>
    </location>
</feature>
<feature type="mutagenesis site" description="Partial retention in the endoplasmic reticulum." evidence="13">
    <original>P</original>
    <variation>A</variation>
    <location>
        <position position="9"/>
    </location>
</feature>
<feature type="mutagenesis site" description="Endoplasmic reticulum localization." evidence="13">
    <location>
        <position position="10"/>
    </location>
</feature>
<feature type="mutagenesis site" description="Endoplasmic reticulum localization." evidence="13">
    <location>
        <position position="11"/>
    </location>
</feature>
<feature type="mutagenesis site" description="No effect on localization." evidence="13">
    <location>
        <position position="12"/>
    </location>
</feature>
<feature type="mutagenesis site" description="Reduced vacuolar trafficking." evidence="12">
    <original>EEE</original>
    <variation>AAA</variation>
    <location>
        <begin position="14"/>
        <end position="16"/>
    </location>
</feature>
<feature type="mutagenesis site" description="Reduced vacuolar trafficking." evidence="12">
    <original>LCPY</original>
    <variation>AAAA</variation>
    <location>
        <begin position="18"/>
        <end position="21"/>
    </location>
</feature>
<feature type="mutagenesis site" description="Reduced vacuolar trafficking." evidence="12">
    <original>YTRL</original>
    <variation>AAAA</variation>
    <location>
        <begin position="21"/>
        <end position="24"/>
    </location>
</feature>
<feature type="mutagenesis site" description="No effect on localization." evidence="13">
    <location>
        <begin position="21"/>
        <end position="24"/>
    </location>
</feature>
<reference key="1">
    <citation type="journal article" date="1997" name="Gene">
        <title>Characterization of two members of the Arabidopsis thaliana gene family, At beta fruct3 and At beta fruct4, coding for vacuolar invertases.</title>
        <authorList>
            <person name="Haouazine-Takvorian N."/>
            <person name="Tymowska-Lalanne Z."/>
            <person name="Takvorian A."/>
            <person name="Tregear J."/>
            <person name="Lejeune B."/>
            <person name="Lecharny A."/>
            <person name="Kreis M."/>
        </authorList>
    </citation>
    <scope>NUCLEOTIDE SEQUENCE [GENOMIC DNA / MRNA]</scope>
    <scope>TISSUE SPECIFICITY</scope>
    <source>
        <strain>cv. Columbia</strain>
        <tissue>Leaf</tissue>
    </source>
</reference>
<reference key="2">
    <citation type="journal article" date="2000" name="Nature">
        <title>Sequence and analysis of chromosome 1 of the plant Arabidopsis thaliana.</title>
        <authorList>
            <person name="Theologis A."/>
            <person name="Ecker J.R."/>
            <person name="Palm C.J."/>
            <person name="Federspiel N.A."/>
            <person name="Kaul S."/>
            <person name="White O."/>
            <person name="Alonso J."/>
            <person name="Altafi H."/>
            <person name="Araujo R."/>
            <person name="Bowman C.L."/>
            <person name="Brooks S.Y."/>
            <person name="Buehler E."/>
            <person name="Chan A."/>
            <person name="Chao Q."/>
            <person name="Chen H."/>
            <person name="Cheuk R.F."/>
            <person name="Chin C.W."/>
            <person name="Chung M.K."/>
            <person name="Conn L."/>
            <person name="Conway A.B."/>
            <person name="Conway A.R."/>
            <person name="Creasy T.H."/>
            <person name="Dewar K."/>
            <person name="Dunn P."/>
            <person name="Etgu P."/>
            <person name="Feldblyum T.V."/>
            <person name="Feng J.-D."/>
            <person name="Fong B."/>
            <person name="Fujii C.Y."/>
            <person name="Gill J.E."/>
            <person name="Goldsmith A.D."/>
            <person name="Haas B."/>
            <person name="Hansen N.F."/>
            <person name="Hughes B."/>
            <person name="Huizar L."/>
            <person name="Hunter J.L."/>
            <person name="Jenkins J."/>
            <person name="Johnson-Hopson C."/>
            <person name="Khan S."/>
            <person name="Khaykin E."/>
            <person name="Kim C.J."/>
            <person name="Koo H.L."/>
            <person name="Kremenetskaia I."/>
            <person name="Kurtz D.B."/>
            <person name="Kwan A."/>
            <person name="Lam B."/>
            <person name="Langin-Hooper S."/>
            <person name="Lee A."/>
            <person name="Lee J.M."/>
            <person name="Lenz C.A."/>
            <person name="Li J.H."/>
            <person name="Li Y.-P."/>
            <person name="Lin X."/>
            <person name="Liu S.X."/>
            <person name="Liu Z.A."/>
            <person name="Luros J.S."/>
            <person name="Maiti R."/>
            <person name="Marziali A."/>
            <person name="Militscher J."/>
            <person name="Miranda M."/>
            <person name="Nguyen M."/>
            <person name="Nierman W.C."/>
            <person name="Osborne B.I."/>
            <person name="Pai G."/>
            <person name="Peterson J."/>
            <person name="Pham P.K."/>
            <person name="Rizzo M."/>
            <person name="Rooney T."/>
            <person name="Rowley D."/>
            <person name="Sakano H."/>
            <person name="Salzberg S.L."/>
            <person name="Schwartz J.R."/>
            <person name="Shinn P."/>
            <person name="Southwick A.M."/>
            <person name="Sun H."/>
            <person name="Tallon L.J."/>
            <person name="Tambunga G."/>
            <person name="Toriumi M.J."/>
            <person name="Town C.D."/>
            <person name="Utterback T."/>
            <person name="Van Aken S."/>
            <person name="Vaysberg M."/>
            <person name="Vysotskaia V.S."/>
            <person name="Walker M."/>
            <person name="Wu D."/>
            <person name="Yu G."/>
            <person name="Fraser C.M."/>
            <person name="Venter J.C."/>
            <person name="Davis R.W."/>
        </authorList>
    </citation>
    <scope>NUCLEOTIDE SEQUENCE [LARGE SCALE GENOMIC DNA]</scope>
    <source>
        <strain>cv. Columbia</strain>
    </source>
</reference>
<reference key="3">
    <citation type="journal article" date="2017" name="Plant J.">
        <title>Araport11: a complete reannotation of the Arabidopsis thaliana reference genome.</title>
        <authorList>
            <person name="Cheng C.Y."/>
            <person name="Krishnakumar V."/>
            <person name="Chan A.P."/>
            <person name="Thibaud-Nissen F."/>
            <person name="Schobel S."/>
            <person name="Town C.D."/>
        </authorList>
    </citation>
    <scope>GENOME REANNOTATION</scope>
    <source>
        <strain>cv. Columbia</strain>
    </source>
</reference>
<reference key="4">
    <citation type="journal article" date="2003" name="Science">
        <title>Empirical analysis of transcriptional activity in the Arabidopsis genome.</title>
        <authorList>
            <person name="Yamada K."/>
            <person name="Lim J."/>
            <person name="Dale J.M."/>
            <person name="Chen H."/>
            <person name="Shinn P."/>
            <person name="Palm C.J."/>
            <person name="Southwick A.M."/>
            <person name="Wu H.C."/>
            <person name="Kim C.J."/>
            <person name="Nguyen M."/>
            <person name="Pham P.K."/>
            <person name="Cheuk R.F."/>
            <person name="Karlin-Newmann G."/>
            <person name="Liu S.X."/>
            <person name="Lam B."/>
            <person name="Sakano H."/>
            <person name="Wu T."/>
            <person name="Yu G."/>
            <person name="Miranda M."/>
            <person name="Quach H.L."/>
            <person name="Tripp M."/>
            <person name="Chang C.H."/>
            <person name="Lee J.M."/>
            <person name="Toriumi M.J."/>
            <person name="Chan M.M."/>
            <person name="Tang C.C."/>
            <person name="Onodera C.S."/>
            <person name="Deng J.M."/>
            <person name="Akiyama K."/>
            <person name="Ansari Y."/>
            <person name="Arakawa T."/>
            <person name="Banh J."/>
            <person name="Banno F."/>
            <person name="Bowser L."/>
            <person name="Brooks S.Y."/>
            <person name="Carninci P."/>
            <person name="Chao Q."/>
            <person name="Choy N."/>
            <person name="Enju A."/>
            <person name="Goldsmith A.D."/>
            <person name="Gurjal M."/>
            <person name="Hansen N.F."/>
            <person name="Hayashizaki Y."/>
            <person name="Johnson-Hopson C."/>
            <person name="Hsuan V.W."/>
            <person name="Iida K."/>
            <person name="Karnes M."/>
            <person name="Khan S."/>
            <person name="Koesema E."/>
            <person name="Ishida J."/>
            <person name="Jiang P.X."/>
            <person name="Jones T."/>
            <person name="Kawai J."/>
            <person name="Kamiya A."/>
            <person name="Meyers C."/>
            <person name="Nakajima M."/>
            <person name="Narusaka M."/>
            <person name="Seki M."/>
            <person name="Sakurai T."/>
            <person name="Satou M."/>
            <person name="Tamse R."/>
            <person name="Vaysberg M."/>
            <person name="Wallender E.K."/>
            <person name="Wong C."/>
            <person name="Yamamura Y."/>
            <person name="Yuan S."/>
            <person name="Shinozaki K."/>
            <person name="Davis R.W."/>
            <person name="Theologis A."/>
            <person name="Ecker J.R."/>
        </authorList>
    </citation>
    <scope>NUCLEOTIDE SEQUENCE [LARGE SCALE MRNA]</scope>
    <source>
        <strain>cv. Columbia</strain>
    </source>
</reference>
<reference key="5">
    <citation type="journal article" date="2002" name="Science">
        <title>Functional annotation of a full-length Arabidopsis cDNA collection.</title>
        <authorList>
            <person name="Seki M."/>
            <person name="Narusaka M."/>
            <person name="Kamiya A."/>
            <person name="Ishida J."/>
            <person name="Satou M."/>
            <person name="Sakurai T."/>
            <person name="Nakajima M."/>
            <person name="Enju A."/>
            <person name="Akiyama K."/>
            <person name="Oono Y."/>
            <person name="Muramatsu M."/>
            <person name="Hayashizaki Y."/>
            <person name="Kawai J."/>
            <person name="Carninci P."/>
            <person name="Itoh M."/>
            <person name="Ishii Y."/>
            <person name="Arakawa T."/>
            <person name="Shibata K."/>
            <person name="Shinagawa A."/>
            <person name="Shinozaki K."/>
        </authorList>
    </citation>
    <scope>NUCLEOTIDE SEQUENCE [LARGE SCALE MRNA] OF 413-636</scope>
    <source>
        <strain>cv. Columbia</strain>
    </source>
</reference>
<reference key="6">
    <citation type="journal article" date="2003" name="Proc. Natl. Acad. Sci. U.S.A.">
        <title>A unique mechanism for protein processing and degradation in Arabidopsis thaliana.</title>
        <authorList>
            <person name="Rojo E."/>
            <person name="Zouhar J."/>
            <person name="Carter C."/>
            <person name="Kovaleva V."/>
            <person name="Raikhel N.V."/>
        </authorList>
    </citation>
    <scope>INDUCTION</scope>
    <scope>SUBCELLULAR LOCATION</scope>
</reference>
<reference key="7">
    <citation type="journal article" date="2004" name="Biochim. Biophys. Acta">
        <title>Plant protein inhibitors of invertases.</title>
        <authorList>
            <person name="Rausch T."/>
            <person name="Greiner S."/>
        </authorList>
    </citation>
    <scope>ACTIVITY REGULATION</scope>
</reference>
<reference key="8">
    <citation type="journal article" date="2004" name="Biosci. Biotechnol. Biochem.">
        <title>Differential expression of acid invertase genes during seed germination in Arabidopsis thaliana.</title>
        <authorList>
            <person name="Mitsuhashi W."/>
            <person name="Sasaki S."/>
            <person name="Kanazawa A."/>
            <person name="Yang Y.-Y."/>
            <person name="Kamiya Y."/>
            <person name="Toyomasu T."/>
        </authorList>
    </citation>
    <scope>DEVELOPMENTAL STAGE</scope>
    <scope>INDUCTION BY GIBBERELLIN</scope>
    <source>
        <strain>cv. Landsberg erecta</strain>
    </source>
</reference>
<reference key="9">
    <citation type="journal article" date="2006" name="Planta">
        <title>Infection with virulent and avirulent P. syringae strains differentially affects photosynthesis and sink metabolism in Arabidopsis leaves.</title>
        <authorList>
            <person name="Bonfig K.B."/>
            <person name="Schreiber U."/>
            <person name="Gabler A."/>
            <person name="Roitsch T."/>
            <person name="Berger S."/>
        </authorList>
    </citation>
    <scope>INDUCTION BY VIRULENT P.SYRINGAE</scope>
</reference>
<reference key="10">
    <citation type="journal article" date="2006" name="Proc. Natl. Acad. Sci. U.S.A.">
        <title>Vacuolar invertase regulates elongation of Arabidopsis thaliana roots as revealed by QTL and mutant analysis.</title>
        <authorList>
            <person name="Sergeeva L.I."/>
            <person name="Keurentjes J.J."/>
            <person name="Bentsink L."/>
            <person name="Vonk J."/>
            <person name="van der Plas L.H.W."/>
            <person name="Koornneef M."/>
            <person name="Vreugdenhil D."/>
        </authorList>
    </citation>
    <scope>FUNCTION</scope>
    <scope>DISRUPTION PHENOTYPE</scope>
    <source>
        <strain>cv. Columbia</strain>
    </source>
</reference>
<reference key="11">
    <citation type="journal article" date="2010" name="Plant Physiol.">
        <title>Mathematical modeling of the central carbohydrate metabolism in Arabidopsis reveals a substantial regulatory influence of vacuolar invertase on whole plant carbon metabolism.</title>
        <authorList>
            <person name="Naegele T."/>
            <person name="Henkel S."/>
            <person name="Hoermiller I."/>
            <person name="Sauter T."/>
            <person name="Sawodny O."/>
            <person name="Ederer M."/>
            <person name="Heyer A.G."/>
        </authorList>
    </citation>
    <scope>FUNCTION</scope>
    <scope>DISRUPTION PHENOTYPE</scope>
    <source>
        <strain>cv. Columbia</strain>
    </source>
</reference>
<reference key="12">
    <citation type="journal article" date="2011" name="Traffic">
        <title>Identification of sorting motifs of AtbetaFruct4 for trafficking from the ER to the vacuole through the Golgi and PVC.</title>
        <authorList>
            <person name="Jung C."/>
            <person name="Lee G.J."/>
            <person name="Jang M."/>
            <person name="Lee M."/>
            <person name="Lee J."/>
            <person name="Kang H."/>
            <person name="Sohn E.J."/>
            <person name="Hwang I."/>
        </authorList>
    </citation>
    <scope>SUBCELLULAR LOCATION</scope>
    <scope>MUTAGENESIS OF 7-LEU-LEU-8; 9-PRO-ILE-10; 14-GLU--GLU-16; 18-LEU--TYR-21 AND 21-TYR--LEU-24</scope>
    <scope>DOMAIN</scope>
    <source>
        <strain>cv. Columbia</strain>
    </source>
</reference>
<reference key="13">
    <citation type="journal article" date="2013" name="Plant Cell Physiol.">
        <title>Trafficking of plant vacuolar invertases: from a membrane-anchored to a soluble status. Understanding sorting information in their complex N-terminal motifs.</title>
        <authorList>
            <person name="Xiang L."/>
            <person name="Van den Ende W."/>
        </authorList>
    </citation>
    <scope>SUBCELLULAR LOCATION</scope>
    <scope>MUTAGENESIS OF ALA-2; 3-SER-SER-4; SER-3; SER-4; ASP-5; ALA-6; 7-LEU-LEU-8; LEU-7; LEU-8; PRO-9; ILE-10; SER-11; ALA-12 AND 21-TYR--LEU-24</scope>
    <scope>DOMAIN</scope>
</reference>
<comment type="function">
    <text evidence="9 11">Possible role in the continued mobilization of sucrose to sink organs (PubMed:20207708). Regulates root elongation (PubMed:16481625).</text>
</comment>
<comment type="catalytic activity">
    <reaction evidence="5">
        <text>Hydrolysis of terminal non-reducing beta-D-fructofuranoside residues in beta-D-fructofuranosides.</text>
        <dbReference type="EC" id="3.2.1.26"/>
    </reaction>
</comment>
<comment type="activity regulation">
    <text evidence="7">Inhibited by C/VIF1 and C/VIF2.</text>
</comment>
<comment type="pathway">
    <text evidence="18">Glycan biosynthesis; sucrose metabolism.</text>
</comment>
<comment type="subunit">
    <text evidence="1">May be present in two forms, a 70 kDa monomer and a heterodimer of the 30 kDa and 38 kDa subunits. The ratio of the levels of the two forms within cells appears to be regulated developmentally (By similarity).</text>
</comment>
<comment type="subcellular location">
    <subcellularLocation>
        <location evidence="6">Vacuole</location>
    </subcellularLocation>
    <subcellularLocation>
        <location evidence="12 13">Endoplasmic reticulum membrane</location>
        <topology>Single-pass type II membrane protein</topology>
    </subcellularLocation>
    <subcellularLocation>
        <location evidence="12 13">Golgi apparatus membrane</location>
        <topology>Single-pass type II membrane protein</topology>
    </subcellularLocation>
    <subcellularLocation>
        <location evidence="12">Golgi apparatus</location>
        <location evidence="12">trans-Golgi network membrane</location>
        <topology>Single-pass type II membrane protein</topology>
    </subcellularLocation>
    <subcellularLocation>
        <location evidence="12">Prevacuolar compartment membrane</location>
        <topology>Single-pass type II membrane protein</topology>
    </subcellularLocation>
    <subcellularLocation>
        <location evidence="12">Vacuole membrane</location>
        <topology>Single-pass type II membrane protein</topology>
    </subcellularLocation>
    <subcellularLocation>
        <location evidence="12 13">Vacuole lumen</location>
    </subcellularLocation>
    <text evidence="12 13">Located in the lytic vacuole but not in the protein storage vacuole. Remains inserted into membranes on its way to the lytic vacuole, following the classical sorting pathway from the endoplasmic reticulum. Released into the lumen of the vacuole from the tonoplast through a proteolytic processing.</text>
</comment>
<comment type="tissue specificity">
    <text evidence="14">Mostly expressed in stems, roots and flowers, and, to a lower extent, in mature leaves.</text>
</comment>
<comment type="developmental stage">
    <text evidence="8">Expressed during germination et seedling growth.</text>
</comment>
<comment type="induction">
    <text evidence="6 8 10">Induced by gibberellin (e.g. gibberellic acid GA) that accumulates in seeds after red light treatment (PubMed:15056893). Accumulates upon infection with virulent but not with avirulent P.syringae (PubMed:16807755). Degraded in a VPEgamma-dependent manner during senescence (PubMed:12773619).</text>
</comment>
<comment type="domain">
    <text evidence="12 13">The LCPYTRL domain (18-24) is critical for trafficking from the trans-Golgi network to the prevacuolar compartment and from the prevacuolar compartment to the central vacuole (PubMed:21899678). The PRRRRP domain (36-41) is involved in sorting to the vacuole (PubMed:23737500). At least two Arg are needed for correct delivery and the presence of two neighboring Pro seems to contribute to the sorting efficiency (PubMed:23737500).</text>
</comment>
<comment type="disruption phenotype">
    <text evidence="9 11">Reduced carbon fixation rates during the day, but increased respiration during the night (PubMed:20207708). Shorter roots (PubMed:16481625).</text>
</comment>
<comment type="similarity">
    <text evidence="18">Belongs to the glycosyl hydrolase 32 family.</text>
</comment>
<comment type="sequence caution" evidence="18">
    <conflict type="erroneous initiation">
        <sequence resource="EMBL-CDS" id="BAC43067"/>
    </conflict>
    <text>Truncated N-terminus.</text>
</comment>